<dbReference type="EC" id="2.8.1.13" evidence="1"/>
<dbReference type="EMBL" id="CP000750">
    <property type="protein sequence ID" value="ABS02796.1"/>
    <property type="status" value="ALT_INIT"/>
    <property type="molecule type" value="Genomic_DNA"/>
</dbReference>
<dbReference type="RefSeq" id="WP_041291897.1">
    <property type="nucleotide sequence ID" value="NC_009664.2"/>
</dbReference>
<dbReference type="SMR" id="A6W7K7"/>
<dbReference type="STRING" id="266940.Krad_1308"/>
<dbReference type="KEGG" id="kra:Krad_1308"/>
<dbReference type="eggNOG" id="COG0482">
    <property type="taxonomic scope" value="Bacteria"/>
</dbReference>
<dbReference type="HOGENOM" id="CLU_035188_0_2_11"/>
<dbReference type="Proteomes" id="UP000001116">
    <property type="component" value="Chromosome"/>
</dbReference>
<dbReference type="GO" id="GO:0005737">
    <property type="term" value="C:cytoplasm"/>
    <property type="evidence" value="ECO:0007669"/>
    <property type="project" value="UniProtKB-SubCell"/>
</dbReference>
<dbReference type="GO" id="GO:0005524">
    <property type="term" value="F:ATP binding"/>
    <property type="evidence" value="ECO:0007669"/>
    <property type="project" value="UniProtKB-KW"/>
</dbReference>
<dbReference type="GO" id="GO:0000049">
    <property type="term" value="F:tRNA binding"/>
    <property type="evidence" value="ECO:0007669"/>
    <property type="project" value="UniProtKB-KW"/>
</dbReference>
<dbReference type="GO" id="GO:0103016">
    <property type="term" value="F:tRNA-uridine 2-sulfurtransferase activity"/>
    <property type="evidence" value="ECO:0007669"/>
    <property type="project" value="UniProtKB-EC"/>
</dbReference>
<dbReference type="GO" id="GO:0002143">
    <property type="term" value="P:tRNA wobble position uridine thiolation"/>
    <property type="evidence" value="ECO:0007669"/>
    <property type="project" value="TreeGrafter"/>
</dbReference>
<dbReference type="CDD" id="cd01998">
    <property type="entry name" value="MnmA_TRMU-like"/>
    <property type="match status" value="1"/>
</dbReference>
<dbReference type="FunFam" id="3.40.50.620:FF:000057">
    <property type="entry name" value="tRNA-specific 2-thiouridylase MnmA"/>
    <property type="match status" value="1"/>
</dbReference>
<dbReference type="Gene3D" id="2.30.30.280">
    <property type="entry name" value="Adenine nucleotide alpha hydrolases-like domains"/>
    <property type="match status" value="1"/>
</dbReference>
<dbReference type="Gene3D" id="3.40.50.620">
    <property type="entry name" value="HUPs"/>
    <property type="match status" value="1"/>
</dbReference>
<dbReference type="Gene3D" id="2.40.30.10">
    <property type="entry name" value="Translation factors"/>
    <property type="match status" value="1"/>
</dbReference>
<dbReference type="HAMAP" id="MF_00144">
    <property type="entry name" value="tRNA_thiouridyl_MnmA"/>
    <property type="match status" value="1"/>
</dbReference>
<dbReference type="InterPro" id="IPR004506">
    <property type="entry name" value="MnmA-like"/>
</dbReference>
<dbReference type="InterPro" id="IPR046885">
    <property type="entry name" value="MnmA-like_C"/>
</dbReference>
<dbReference type="InterPro" id="IPR046884">
    <property type="entry name" value="MnmA-like_central"/>
</dbReference>
<dbReference type="InterPro" id="IPR023382">
    <property type="entry name" value="MnmA-like_central_sf"/>
</dbReference>
<dbReference type="InterPro" id="IPR014729">
    <property type="entry name" value="Rossmann-like_a/b/a_fold"/>
</dbReference>
<dbReference type="NCBIfam" id="NF001138">
    <property type="entry name" value="PRK00143.1"/>
    <property type="match status" value="1"/>
</dbReference>
<dbReference type="NCBIfam" id="TIGR00420">
    <property type="entry name" value="trmU"/>
    <property type="match status" value="1"/>
</dbReference>
<dbReference type="PANTHER" id="PTHR11933:SF5">
    <property type="entry name" value="MITOCHONDRIAL TRNA-SPECIFIC 2-THIOURIDYLASE 1"/>
    <property type="match status" value="1"/>
</dbReference>
<dbReference type="PANTHER" id="PTHR11933">
    <property type="entry name" value="TRNA 5-METHYLAMINOMETHYL-2-THIOURIDYLATE -METHYLTRANSFERASE"/>
    <property type="match status" value="1"/>
</dbReference>
<dbReference type="Pfam" id="PF03054">
    <property type="entry name" value="tRNA_Me_trans"/>
    <property type="match status" value="1"/>
</dbReference>
<dbReference type="Pfam" id="PF20258">
    <property type="entry name" value="tRNA_Me_trans_C"/>
    <property type="match status" value="1"/>
</dbReference>
<dbReference type="Pfam" id="PF20259">
    <property type="entry name" value="tRNA_Me_trans_M"/>
    <property type="match status" value="1"/>
</dbReference>
<dbReference type="SUPFAM" id="SSF52402">
    <property type="entry name" value="Adenine nucleotide alpha hydrolases-like"/>
    <property type="match status" value="1"/>
</dbReference>
<protein>
    <recommendedName>
        <fullName evidence="1">tRNA-specific 2-thiouridylase MnmA</fullName>
        <ecNumber evidence="1">2.8.1.13</ecNumber>
    </recommendedName>
</protein>
<feature type="chain" id="PRO_0000349667" description="tRNA-specific 2-thiouridylase MnmA">
    <location>
        <begin position="1"/>
        <end position="365"/>
    </location>
</feature>
<feature type="region of interest" description="Interaction with tRNA" evidence="1">
    <location>
        <begin position="148"/>
        <end position="150"/>
    </location>
</feature>
<feature type="active site" description="Nucleophile" evidence="1">
    <location>
        <position position="101"/>
    </location>
</feature>
<feature type="active site" description="Cysteine persulfide intermediate" evidence="1">
    <location>
        <position position="199"/>
    </location>
</feature>
<feature type="binding site" evidence="1">
    <location>
        <begin position="6"/>
        <end position="13"/>
    </location>
    <ligand>
        <name>ATP</name>
        <dbReference type="ChEBI" id="CHEBI:30616"/>
    </ligand>
</feature>
<feature type="binding site" evidence="1">
    <location>
        <position position="32"/>
    </location>
    <ligand>
        <name>ATP</name>
        <dbReference type="ChEBI" id="CHEBI:30616"/>
    </ligand>
</feature>
<feature type="binding site" evidence="1">
    <location>
        <position position="125"/>
    </location>
    <ligand>
        <name>ATP</name>
        <dbReference type="ChEBI" id="CHEBI:30616"/>
    </ligand>
</feature>
<feature type="site" description="Interaction with tRNA" evidence="1">
    <location>
        <position position="126"/>
    </location>
</feature>
<feature type="site" description="Interaction with tRNA" evidence="1">
    <location>
        <position position="342"/>
    </location>
</feature>
<feature type="disulfide bond" description="Alternate" evidence="1">
    <location>
        <begin position="101"/>
        <end position="199"/>
    </location>
</feature>
<organism>
    <name type="scientific">Kineococcus radiotolerans (strain ATCC BAA-149 / DSM 14245 / SRS30216)</name>
    <dbReference type="NCBI Taxonomy" id="266940"/>
    <lineage>
        <taxon>Bacteria</taxon>
        <taxon>Bacillati</taxon>
        <taxon>Actinomycetota</taxon>
        <taxon>Actinomycetes</taxon>
        <taxon>Kineosporiales</taxon>
        <taxon>Kineosporiaceae</taxon>
        <taxon>Kineococcus</taxon>
    </lineage>
</organism>
<sequence>MRVLAAMSGGVDSAVAAARAVDAGHEVVGVHMALNRSPGTLRTGSRGCCTIEDALDARRAADLLGIPFYVWDLSEDFVEDVVADFVAEYAAGRTPNPCVRCNERIKFAALLDKGIALGFDAVATGHYARVVTGPDGRAELHRAADAAKDQSYVLAVLDADQVAHAMFPLGDAPTKAEVRAEAERRGLPVASKPDSHDICFIPDGDTRGFLADKLGEVPGEVVDESGEVLGTHTGTYGYTVGQRKGLGISRPAADGRPRYVLSIEPVRRTVTVGPAERLSVGALEAVEAVWNADAPVGPVEVHVQVRAHGEPVPAVAELTGPADDPVLRVRLRTPLSGVAPGQTVAVYRGTRVLGSATISGTTPLS</sequence>
<accession>A6W7K7</accession>
<gene>
    <name evidence="1" type="primary">mnmA</name>
    <name type="ordered locus">Krad_1308</name>
</gene>
<keyword id="KW-0067">ATP-binding</keyword>
<keyword id="KW-0963">Cytoplasm</keyword>
<keyword id="KW-1015">Disulfide bond</keyword>
<keyword id="KW-0547">Nucleotide-binding</keyword>
<keyword id="KW-1185">Reference proteome</keyword>
<keyword id="KW-0694">RNA-binding</keyword>
<keyword id="KW-0808">Transferase</keyword>
<keyword id="KW-0819">tRNA processing</keyword>
<keyword id="KW-0820">tRNA-binding</keyword>
<reference key="1">
    <citation type="journal article" date="2008" name="PLoS ONE">
        <title>Survival in nuclear waste, extreme resistance, and potential applications gleaned from the genome sequence of Kineococcus radiotolerans SRS30216.</title>
        <authorList>
            <person name="Bagwell C.E."/>
            <person name="Bhat S."/>
            <person name="Hawkins G.M."/>
            <person name="Smith B.W."/>
            <person name="Biswas T."/>
            <person name="Hoover T.R."/>
            <person name="Saunders E."/>
            <person name="Han C.S."/>
            <person name="Tsodikov O.V."/>
            <person name="Shimkets L.J."/>
        </authorList>
    </citation>
    <scope>NUCLEOTIDE SEQUENCE [LARGE SCALE GENOMIC DNA]</scope>
    <source>
        <strain>ATCC BAA-149 / DSM 14245 / SRS30216</strain>
    </source>
</reference>
<comment type="function">
    <text evidence="1">Catalyzes the 2-thiolation of uridine at the wobble position (U34) of tRNA, leading to the formation of s(2)U34.</text>
</comment>
<comment type="catalytic activity">
    <reaction evidence="1">
        <text>S-sulfanyl-L-cysteinyl-[protein] + uridine(34) in tRNA + AH2 + ATP = 2-thiouridine(34) in tRNA + L-cysteinyl-[protein] + A + AMP + diphosphate + H(+)</text>
        <dbReference type="Rhea" id="RHEA:47032"/>
        <dbReference type="Rhea" id="RHEA-COMP:10131"/>
        <dbReference type="Rhea" id="RHEA-COMP:11726"/>
        <dbReference type="Rhea" id="RHEA-COMP:11727"/>
        <dbReference type="Rhea" id="RHEA-COMP:11728"/>
        <dbReference type="ChEBI" id="CHEBI:13193"/>
        <dbReference type="ChEBI" id="CHEBI:15378"/>
        <dbReference type="ChEBI" id="CHEBI:17499"/>
        <dbReference type="ChEBI" id="CHEBI:29950"/>
        <dbReference type="ChEBI" id="CHEBI:30616"/>
        <dbReference type="ChEBI" id="CHEBI:33019"/>
        <dbReference type="ChEBI" id="CHEBI:61963"/>
        <dbReference type="ChEBI" id="CHEBI:65315"/>
        <dbReference type="ChEBI" id="CHEBI:87170"/>
        <dbReference type="ChEBI" id="CHEBI:456215"/>
        <dbReference type="EC" id="2.8.1.13"/>
    </reaction>
</comment>
<comment type="subcellular location">
    <subcellularLocation>
        <location evidence="1">Cytoplasm</location>
    </subcellularLocation>
</comment>
<comment type="similarity">
    <text evidence="1">Belongs to the MnmA/TRMU family.</text>
</comment>
<comment type="sequence caution" evidence="2">
    <conflict type="erroneous initiation">
        <sequence resource="EMBL-CDS" id="ABS02796"/>
    </conflict>
</comment>
<name>MNMA_KINRD</name>
<proteinExistence type="inferred from homology"/>
<evidence type="ECO:0000255" key="1">
    <source>
        <dbReference type="HAMAP-Rule" id="MF_00144"/>
    </source>
</evidence>
<evidence type="ECO:0000305" key="2"/>